<organism>
    <name type="scientific">Salmonella paratyphi A (strain AKU_12601)</name>
    <dbReference type="NCBI Taxonomy" id="554290"/>
    <lineage>
        <taxon>Bacteria</taxon>
        <taxon>Pseudomonadati</taxon>
        <taxon>Pseudomonadota</taxon>
        <taxon>Gammaproteobacteria</taxon>
        <taxon>Enterobacterales</taxon>
        <taxon>Enterobacteriaceae</taxon>
        <taxon>Salmonella</taxon>
    </lineage>
</organism>
<proteinExistence type="inferred from homology"/>
<sequence>MAKTLYEKLFDAHVVFEAPNETPLLYIDRHLVHEVTSPQAFDGLRAHHRPVRQPGKTFATMDHNVSTQTKDINASGEMARIQMQELIKNCNEFGVELYDLNHPYQGIVHVMGPEQGVTLPGMTIVCGDSHTATHGAFGALAFGIGTSEVEHVLATQTLKQGRAKTMKIEVTGSAAPGITAKDIVLAIIGKTGSAGGTGHVVEFCGDAIRALSMEGRMTLCNMAIEMGAKAGLVAPDETTFNYVKGRLHAPKGCDFDEAVEYWKTLKTDDGATFDTVVTLRAEEIAPQVTWGTNPGQVISVTDIIPDPASFSDPVERASAEKALAYMGLQPGVPLTDVAIDKVFIGSCTNSRIEDLRAAAEVAKGRKVAPGVQALVVPGSGPVKAQAEAEGLDKIFIEAGFEWRLPGCSMCLAMNNDRLNPGERCASTSNRNFEGRQGRGGRTHLVSPAMAAAAAVTGHFADIRSIK</sequence>
<feature type="chain" id="PRO_1000135712" description="3-isopropylmalate dehydratase large subunit">
    <location>
        <begin position="1"/>
        <end position="466"/>
    </location>
</feature>
<feature type="binding site" evidence="1">
    <location>
        <position position="347"/>
    </location>
    <ligand>
        <name>[4Fe-4S] cluster</name>
        <dbReference type="ChEBI" id="CHEBI:49883"/>
    </ligand>
</feature>
<feature type="binding site" evidence="1">
    <location>
        <position position="407"/>
    </location>
    <ligand>
        <name>[4Fe-4S] cluster</name>
        <dbReference type="ChEBI" id="CHEBI:49883"/>
    </ligand>
</feature>
<feature type="binding site" evidence="1">
    <location>
        <position position="410"/>
    </location>
    <ligand>
        <name>[4Fe-4S] cluster</name>
        <dbReference type="ChEBI" id="CHEBI:49883"/>
    </ligand>
</feature>
<evidence type="ECO:0000255" key="1">
    <source>
        <dbReference type="HAMAP-Rule" id="MF_01026"/>
    </source>
</evidence>
<name>LEUC_SALPK</name>
<reference key="1">
    <citation type="journal article" date="2009" name="BMC Genomics">
        <title>Pseudogene accumulation in the evolutionary histories of Salmonella enterica serovars Paratyphi A and Typhi.</title>
        <authorList>
            <person name="Holt K.E."/>
            <person name="Thomson N.R."/>
            <person name="Wain J."/>
            <person name="Langridge G.C."/>
            <person name="Hasan R."/>
            <person name="Bhutta Z.A."/>
            <person name="Quail M.A."/>
            <person name="Norbertczak H."/>
            <person name="Walker D."/>
            <person name="Simmonds M."/>
            <person name="White B."/>
            <person name="Bason N."/>
            <person name="Mungall K."/>
            <person name="Dougan G."/>
            <person name="Parkhill J."/>
        </authorList>
    </citation>
    <scope>NUCLEOTIDE SEQUENCE [LARGE SCALE GENOMIC DNA]</scope>
    <source>
        <strain>AKU_12601</strain>
    </source>
</reference>
<accession>B5BLB3</accession>
<dbReference type="EC" id="4.2.1.33" evidence="1"/>
<dbReference type="EMBL" id="FM200053">
    <property type="protein sequence ID" value="CAR58220.1"/>
    <property type="molecule type" value="Genomic_DNA"/>
</dbReference>
<dbReference type="RefSeq" id="WP_001140636.1">
    <property type="nucleotide sequence ID" value="NC_011147.1"/>
</dbReference>
<dbReference type="SMR" id="B5BLB3"/>
<dbReference type="KEGG" id="sek:SSPA0109"/>
<dbReference type="HOGENOM" id="CLU_006714_3_4_6"/>
<dbReference type="UniPathway" id="UPA00048">
    <property type="reaction ID" value="UER00071"/>
</dbReference>
<dbReference type="Proteomes" id="UP000001869">
    <property type="component" value="Chromosome"/>
</dbReference>
<dbReference type="GO" id="GO:0003861">
    <property type="term" value="F:3-isopropylmalate dehydratase activity"/>
    <property type="evidence" value="ECO:0007669"/>
    <property type="project" value="UniProtKB-UniRule"/>
</dbReference>
<dbReference type="GO" id="GO:0051539">
    <property type="term" value="F:4 iron, 4 sulfur cluster binding"/>
    <property type="evidence" value="ECO:0007669"/>
    <property type="project" value="UniProtKB-KW"/>
</dbReference>
<dbReference type="GO" id="GO:0046872">
    <property type="term" value="F:metal ion binding"/>
    <property type="evidence" value="ECO:0007669"/>
    <property type="project" value="UniProtKB-KW"/>
</dbReference>
<dbReference type="GO" id="GO:0009098">
    <property type="term" value="P:L-leucine biosynthetic process"/>
    <property type="evidence" value="ECO:0007669"/>
    <property type="project" value="UniProtKB-UniRule"/>
</dbReference>
<dbReference type="CDD" id="cd01583">
    <property type="entry name" value="IPMI"/>
    <property type="match status" value="1"/>
</dbReference>
<dbReference type="FunFam" id="3.30.499.10:FF:000006">
    <property type="entry name" value="3-isopropylmalate dehydratase large subunit"/>
    <property type="match status" value="1"/>
</dbReference>
<dbReference type="FunFam" id="3.30.499.10:FF:000007">
    <property type="entry name" value="3-isopropylmalate dehydratase large subunit"/>
    <property type="match status" value="1"/>
</dbReference>
<dbReference type="Gene3D" id="3.30.499.10">
    <property type="entry name" value="Aconitase, domain 3"/>
    <property type="match status" value="2"/>
</dbReference>
<dbReference type="HAMAP" id="MF_01026">
    <property type="entry name" value="LeuC_type1"/>
    <property type="match status" value="1"/>
</dbReference>
<dbReference type="InterPro" id="IPR004430">
    <property type="entry name" value="3-IsopropMal_deHydase_lsu"/>
</dbReference>
<dbReference type="InterPro" id="IPR015931">
    <property type="entry name" value="Acnase/IPM_dHydase_lsu_aba_1/3"/>
</dbReference>
<dbReference type="InterPro" id="IPR001030">
    <property type="entry name" value="Acoase/IPM_deHydtase_lsu_aba"/>
</dbReference>
<dbReference type="InterPro" id="IPR018136">
    <property type="entry name" value="Aconitase_4Fe-4S_BS"/>
</dbReference>
<dbReference type="InterPro" id="IPR036008">
    <property type="entry name" value="Aconitase_4Fe-4S_dom"/>
</dbReference>
<dbReference type="InterPro" id="IPR050067">
    <property type="entry name" value="IPM_dehydratase_rel_enz"/>
</dbReference>
<dbReference type="InterPro" id="IPR033941">
    <property type="entry name" value="IPMI_cat"/>
</dbReference>
<dbReference type="NCBIfam" id="TIGR00170">
    <property type="entry name" value="leuC"/>
    <property type="match status" value="1"/>
</dbReference>
<dbReference type="NCBIfam" id="NF004016">
    <property type="entry name" value="PRK05478.1"/>
    <property type="match status" value="1"/>
</dbReference>
<dbReference type="NCBIfam" id="NF009116">
    <property type="entry name" value="PRK12466.1"/>
    <property type="match status" value="1"/>
</dbReference>
<dbReference type="PANTHER" id="PTHR43822:SF9">
    <property type="entry name" value="3-ISOPROPYLMALATE DEHYDRATASE"/>
    <property type="match status" value="1"/>
</dbReference>
<dbReference type="PANTHER" id="PTHR43822">
    <property type="entry name" value="HOMOACONITASE, MITOCHONDRIAL-RELATED"/>
    <property type="match status" value="1"/>
</dbReference>
<dbReference type="Pfam" id="PF00330">
    <property type="entry name" value="Aconitase"/>
    <property type="match status" value="1"/>
</dbReference>
<dbReference type="PRINTS" id="PR00415">
    <property type="entry name" value="ACONITASE"/>
</dbReference>
<dbReference type="SUPFAM" id="SSF53732">
    <property type="entry name" value="Aconitase iron-sulfur domain"/>
    <property type="match status" value="1"/>
</dbReference>
<dbReference type="PROSITE" id="PS00450">
    <property type="entry name" value="ACONITASE_1"/>
    <property type="match status" value="1"/>
</dbReference>
<dbReference type="PROSITE" id="PS01244">
    <property type="entry name" value="ACONITASE_2"/>
    <property type="match status" value="1"/>
</dbReference>
<gene>
    <name evidence="1" type="primary">leuC</name>
    <name type="ordered locus">SSPA0109</name>
</gene>
<protein>
    <recommendedName>
        <fullName evidence="1">3-isopropylmalate dehydratase large subunit</fullName>
        <ecNumber evidence="1">4.2.1.33</ecNumber>
    </recommendedName>
    <alternativeName>
        <fullName evidence="1">Alpha-IPM isomerase</fullName>
        <shortName evidence="1">IPMI</shortName>
    </alternativeName>
    <alternativeName>
        <fullName evidence="1">Isopropylmalate isomerase</fullName>
    </alternativeName>
</protein>
<keyword id="KW-0004">4Fe-4S</keyword>
<keyword id="KW-0028">Amino-acid biosynthesis</keyword>
<keyword id="KW-0100">Branched-chain amino acid biosynthesis</keyword>
<keyword id="KW-0408">Iron</keyword>
<keyword id="KW-0411">Iron-sulfur</keyword>
<keyword id="KW-0432">Leucine biosynthesis</keyword>
<keyword id="KW-0456">Lyase</keyword>
<keyword id="KW-0479">Metal-binding</keyword>
<comment type="function">
    <text evidence="1">Catalyzes the isomerization between 2-isopropylmalate and 3-isopropylmalate, via the formation of 2-isopropylmaleate.</text>
</comment>
<comment type="catalytic activity">
    <reaction evidence="1">
        <text>(2R,3S)-3-isopropylmalate = (2S)-2-isopropylmalate</text>
        <dbReference type="Rhea" id="RHEA:32287"/>
        <dbReference type="ChEBI" id="CHEBI:1178"/>
        <dbReference type="ChEBI" id="CHEBI:35121"/>
        <dbReference type="EC" id="4.2.1.33"/>
    </reaction>
</comment>
<comment type="cofactor">
    <cofactor evidence="1">
        <name>[4Fe-4S] cluster</name>
        <dbReference type="ChEBI" id="CHEBI:49883"/>
    </cofactor>
    <text evidence="1">Binds 1 [4Fe-4S] cluster per subunit.</text>
</comment>
<comment type="pathway">
    <text evidence="1">Amino-acid biosynthesis; L-leucine biosynthesis; L-leucine from 3-methyl-2-oxobutanoate: step 2/4.</text>
</comment>
<comment type="subunit">
    <text evidence="1">Heterodimer of LeuC and LeuD.</text>
</comment>
<comment type="similarity">
    <text evidence="1">Belongs to the aconitase/IPM isomerase family. LeuC type 1 subfamily.</text>
</comment>